<comment type="function">
    <text evidence="1">One of the primary rRNA binding proteins, it binds directly to 16S rRNA where it helps nucleate assembly of the platform of the 30S subunit by binding and bridging several RNA helices of the 16S rRNA.</text>
</comment>
<comment type="function">
    <text evidence="1">Forms an intersubunit bridge (bridge B4) with the 23S rRNA of the 50S subunit in the ribosome.</text>
</comment>
<comment type="subunit">
    <text evidence="1">Part of the 30S ribosomal subunit. Forms a bridge to the 50S subunit in the 70S ribosome, contacting the 23S rRNA.</text>
</comment>
<comment type="similarity">
    <text evidence="1">Belongs to the universal ribosomal protein uS15 family.</text>
</comment>
<accession>O66594</accession>
<name>RS15_AQUAE</name>
<organism>
    <name type="scientific">Aquifex aeolicus (strain VF5)</name>
    <dbReference type="NCBI Taxonomy" id="224324"/>
    <lineage>
        <taxon>Bacteria</taxon>
        <taxon>Pseudomonadati</taxon>
        <taxon>Aquificota</taxon>
        <taxon>Aquificia</taxon>
        <taxon>Aquificales</taxon>
        <taxon>Aquificaceae</taxon>
        <taxon>Aquifex</taxon>
    </lineage>
</organism>
<gene>
    <name evidence="1" type="primary">rpsO</name>
    <name type="ordered locus">aq_226</name>
    <name type="ORF">aq_226A</name>
</gene>
<keyword id="KW-1185">Reference proteome</keyword>
<keyword id="KW-0687">Ribonucleoprotein</keyword>
<keyword id="KW-0689">Ribosomal protein</keyword>
<keyword id="KW-0694">RNA-binding</keyword>
<keyword id="KW-0699">rRNA-binding</keyword>
<reference key="1">
    <citation type="journal article" date="1998" name="Nature">
        <title>The complete genome of the hyperthermophilic bacterium Aquifex aeolicus.</title>
        <authorList>
            <person name="Deckert G."/>
            <person name="Warren P.V."/>
            <person name="Gaasterland T."/>
            <person name="Young W.G."/>
            <person name="Lenox A.L."/>
            <person name="Graham D.E."/>
            <person name="Overbeek R."/>
            <person name="Snead M.A."/>
            <person name="Keller M."/>
            <person name="Aujay M."/>
            <person name="Huber R."/>
            <person name="Feldman R.A."/>
            <person name="Short J.M."/>
            <person name="Olsen G.J."/>
            <person name="Swanson R.V."/>
        </authorList>
    </citation>
    <scope>NUCLEOTIDE SEQUENCE [LARGE SCALE GENOMIC DNA]</scope>
    <source>
        <strain>VF5</strain>
    </source>
</reference>
<proteinExistence type="inferred from homology"/>
<sequence>MVLPKDVKWDLIRQFQRHEQDTGSPEVQIAILTERINRLTEHMKKHKKDIHSRRGLIAMVNKRRKLLEYLRETDYAKYLEVVQKLNLKVK</sequence>
<protein>
    <recommendedName>
        <fullName evidence="1">Small ribosomal subunit protein uS15</fullName>
    </recommendedName>
    <alternativeName>
        <fullName evidence="2">30S ribosomal protein S15</fullName>
    </alternativeName>
</protein>
<feature type="chain" id="PRO_0000115371" description="Small ribosomal subunit protein uS15">
    <location>
        <begin position="1"/>
        <end position="90"/>
    </location>
</feature>
<evidence type="ECO:0000255" key="1">
    <source>
        <dbReference type="HAMAP-Rule" id="MF_01343"/>
    </source>
</evidence>
<evidence type="ECO:0000305" key="2"/>
<dbReference type="EMBL" id="AE000657">
    <property type="protein sequence ID" value="AAC06563.1"/>
    <property type="molecule type" value="Genomic_DNA"/>
</dbReference>
<dbReference type="PIR" id="F70320">
    <property type="entry name" value="F70320"/>
</dbReference>
<dbReference type="RefSeq" id="NP_213154.1">
    <property type="nucleotide sequence ID" value="NC_000918.1"/>
</dbReference>
<dbReference type="RefSeq" id="WP_010880092.1">
    <property type="nucleotide sequence ID" value="NC_000918.1"/>
</dbReference>
<dbReference type="SMR" id="O66594"/>
<dbReference type="FunCoup" id="O66594">
    <property type="interactions" value="428"/>
</dbReference>
<dbReference type="STRING" id="224324.aq_226a"/>
<dbReference type="EnsemblBacteria" id="AAC06563">
    <property type="protein sequence ID" value="AAC06563"/>
    <property type="gene ID" value="aq_226a"/>
</dbReference>
<dbReference type="KEGG" id="aae:aq_226a"/>
<dbReference type="PATRIC" id="fig|224324.8.peg.185"/>
<dbReference type="eggNOG" id="COG0184">
    <property type="taxonomic scope" value="Bacteria"/>
</dbReference>
<dbReference type="HOGENOM" id="CLU_148518_0_0_0"/>
<dbReference type="InParanoid" id="O66594"/>
<dbReference type="OrthoDB" id="9799262at2"/>
<dbReference type="Proteomes" id="UP000000798">
    <property type="component" value="Chromosome"/>
</dbReference>
<dbReference type="GO" id="GO:0022627">
    <property type="term" value="C:cytosolic small ribosomal subunit"/>
    <property type="evidence" value="ECO:0000318"/>
    <property type="project" value="GO_Central"/>
</dbReference>
<dbReference type="GO" id="GO:0019843">
    <property type="term" value="F:rRNA binding"/>
    <property type="evidence" value="ECO:0007669"/>
    <property type="project" value="UniProtKB-UniRule"/>
</dbReference>
<dbReference type="GO" id="GO:0003735">
    <property type="term" value="F:structural constituent of ribosome"/>
    <property type="evidence" value="ECO:0007669"/>
    <property type="project" value="InterPro"/>
</dbReference>
<dbReference type="GO" id="GO:0006412">
    <property type="term" value="P:translation"/>
    <property type="evidence" value="ECO:0007669"/>
    <property type="project" value="UniProtKB-UniRule"/>
</dbReference>
<dbReference type="CDD" id="cd00353">
    <property type="entry name" value="Ribosomal_S15p_S13e"/>
    <property type="match status" value="1"/>
</dbReference>
<dbReference type="FunFam" id="1.10.287.10:FF:000002">
    <property type="entry name" value="30S ribosomal protein S15"/>
    <property type="match status" value="1"/>
</dbReference>
<dbReference type="Gene3D" id="6.10.250.3130">
    <property type="match status" value="1"/>
</dbReference>
<dbReference type="Gene3D" id="1.10.287.10">
    <property type="entry name" value="S15/NS1, RNA-binding"/>
    <property type="match status" value="1"/>
</dbReference>
<dbReference type="HAMAP" id="MF_01343_B">
    <property type="entry name" value="Ribosomal_uS15_B"/>
    <property type="match status" value="1"/>
</dbReference>
<dbReference type="InterPro" id="IPR000589">
    <property type="entry name" value="Ribosomal_uS15"/>
</dbReference>
<dbReference type="InterPro" id="IPR005290">
    <property type="entry name" value="Ribosomal_uS15_bac-type"/>
</dbReference>
<dbReference type="InterPro" id="IPR009068">
    <property type="entry name" value="uS15_NS1_RNA-bd_sf"/>
</dbReference>
<dbReference type="NCBIfam" id="TIGR00952">
    <property type="entry name" value="S15_bact"/>
    <property type="match status" value="1"/>
</dbReference>
<dbReference type="PANTHER" id="PTHR23321">
    <property type="entry name" value="RIBOSOMAL PROTEIN S15, BACTERIAL AND ORGANELLAR"/>
    <property type="match status" value="1"/>
</dbReference>
<dbReference type="PANTHER" id="PTHR23321:SF26">
    <property type="entry name" value="SMALL RIBOSOMAL SUBUNIT PROTEIN US15M"/>
    <property type="match status" value="1"/>
</dbReference>
<dbReference type="Pfam" id="PF00312">
    <property type="entry name" value="Ribosomal_S15"/>
    <property type="match status" value="1"/>
</dbReference>
<dbReference type="SMART" id="SM01387">
    <property type="entry name" value="Ribosomal_S15"/>
    <property type="match status" value="1"/>
</dbReference>
<dbReference type="SUPFAM" id="SSF47060">
    <property type="entry name" value="S15/NS1 RNA-binding domain"/>
    <property type="match status" value="1"/>
</dbReference>
<dbReference type="PROSITE" id="PS00362">
    <property type="entry name" value="RIBOSOMAL_S15"/>
    <property type="match status" value="1"/>
</dbReference>